<gene>
    <name type="primary">LPE1</name>
</gene>
<reference key="1">
    <citation type="journal article" date="1996" name="Plant Cell">
        <title>Leaf permease1 gene of maize is required for chloroplast development.</title>
        <authorList>
            <person name="Schultes N.P."/>
            <person name="Brutnell T.P."/>
            <person name="Allen A."/>
            <person name="Dellaporta S.L."/>
            <person name="Nelson T."/>
            <person name="Chen J."/>
        </authorList>
    </citation>
    <scope>NUCLEOTIDE SEQUENCE [MRNA]</scope>
    <scope>TISSUE SPECIFICITY</scope>
    <scope>DISRUPTION PHENOTYPE</scope>
    <source>
        <tissue>Leaf</tissue>
    </source>
</reference>
<reference key="2">
    <citation type="journal article" date="2001" name="Plant Cell">
        <title>Functional characterization of a maize purine transporter by expression in Aspergillus nidulans.</title>
        <authorList>
            <person name="Argyrou E."/>
            <person name="Sophianopoulou V."/>
            <person name="Schultes N.P."/>
            <person name="Diallinas G."/>
        </authorList>
    </citation>
    <scope>FUNCTION</scope>
    <scope>ACTIVITY REGULATION</scope>
    <scope>BIOPHYSICOCHEMICAL PROPERTIES</scope>
</reference>
<keyword id="KW-0472">Membrane</keyword>
<keyword id="KW-1185">Reference proteome</keyword>
<keyword id="KW-0812">Transmembrane</keyword>
<keyword id="KW-1133">Transmembrane helix</keyword>
<sequence>MPPVKAEDLVVHAVKEQFAGLDYCITSPPPWITTVLVGFQHYLVMLGTTVLIATIIVPLMGGGHAEKAIVIQTILFLSGINTLLQVHFGTRLPAVMSGSYTYIYPAVAIILSPRYALLIDPLERFVFTMRSLQGALIIAGVFQAVVGFFGIWRVFIRFLSPLAAVPFVTLTGLGLFFFAFPGVTKCIEVGLPALVLLVIFAEYASHLFAKGSFVFSRCAVLVTVVIIWIYAEILTAAGAYNERGPVTQFSCRADRSGIIQGSPWVRFPYPFQWGYPIFCFQDCFAMLAASFASLIESTGTLIAVSRYSGATFCPPSVFSRGIGWEGISIILDGMCGTLTGTAASVENAGLLAVTRVGSRRVIKISALFMIFFSLFAKFGAVLASIPLPIFAALYCVLFAYSAGAGFSLLQYCNLNSLRTKFILSISLFLGLSIPQYFRVYEMFFGFGPVHTHSVAFNVMVNVIFSSPATVAAILAYLLDCTHLYWEASVKKDRGWFWWEKFKSYKYDGRSEEFYRLPYGLSRYFPSL</sequence>
<name>LPE1_MAIZE</name>
<comment type="function">
    <text evidence="2">High affinity uric acid-xanthine transporter in A.nidulans. Binds, but cannot transport ascorbic acid.</text>
</comment>
<comment type="activity regulation">
    <text evidence="2">Inhibited by excess of xanthin, uric acid and ascorbic acid, and by 100 um N,N-dicyclohexylcarbodiimide and 30 um carbonyl cyanide m-chlorophenyl-hydrazone.</text>
</comment>
<comment type="biophysicochemical properties">
    <kinetics>
        <KM evidence="2">30 uM for xanthine</KM>
        <text>Measured in the absence of ascorbic acid.</text>
    </kinetics>
</comment>
<comment type="subcellular location">
    <subcellularLocation>
        <location evidence="4">Membrane</location>
        <topology evidence="4">Multi-pass membrane protein</topology>
    </subcellularLocation>
</comment>
<comment type="tissue specificity">
    <text evidence="3">Highly expressed in roots.</text>
</comment>
<comment type="disruption phenotype">
    <text evidence="3">Disrupted chloroplast ultrastructure.</text>
</comment>
<comment type="similarity">
    <text evidence="4">Belongs to the nucleobase:cation symporter-2 (NCS2) (TC 2.A.40) family.</text>
</comment>
<proteinExistence type="evidence at protein level"/>
<feature type="chain" id="PRO_0000270170" description="Nucleobase-ascorbate transporter LPE1">
    <location>
        <begin position="1"/>
        <end position="527"/>
    </location>
</feature>
<feature type="transmembrane region" description="Helical" evidence="1">
    <location>
        <begin position="43"/>
        <end position="63"/>
    </location>
</feature>
<feature type="transmembrane region" description="Helical" evidence="1">
    <location>
        <begin position="68"/>
        <end position="88"/>
    </location>
</feature>
<feature type="transmembrane region" description="Helical" evidence="1">
    <location>
        <begin position="92"/>
        <end position="112"/>
    </location>
</feature>
<feature type="transmembrane region" description="Helical" evidence="1">
    <location>
        <begin position="132"/>
        <end position="152"/>
    </location>
</feature>
<feature type="transmembrane region" description="Helical" evidence="1">
    <location>
        <begin position="163"/>
        <end position="183"/>
    </location>
</feature>
<feature type="transmembrane region" description="Helical" evidence="1">
    <location>
        <begin position="189"/>
        <end position="209"/>
    </location>
</feature>
<feature type="transmembrane region" description="Helical" evidence="1">
    <location>
        <begin position="219"/>
        <end position="239"/>
    </location>
</feature>
<feature type="transmembrane region" description="Helical" evidence="1">
    <location>
        <begin position="284"/>
        <end position="304"/>
    </location>
</feature>
<feature type="transmembrane region" description="Helical" evidence="1">
    <location>
        <begin position="361"/>
        <end position="383"/>
    </location>
</feature>
<feature type="transmembrane region" description="Helical" evidence="1">
    <location>
        <begin position="387"/>
        <end position="409"/>
    </location>
</feature>
<feature type="transmembrane region" description="Helical" evidence="1">
    <location>
        <begin position="427"/>
        <end position="447"/>
    </location>
</feature>
<feature type="transmembrane region" description="Helical" evidence="1">
    <location>
        <begin position="458"/>
        <end position="478"/>
    </location>
</feature>
<protein>
    <recommendedName>
        <fullName>Nucleobase-ascorbate transporter LPE1</fullName>
    </recommendedName>
    <alternativeName>
        <fullName>Leaf permease protein 1</fullName>
    </alternativeName>
</protein>
<evidence type="ECO:0000255" key="1"/>
<evidence type="ECO:0000269" key="2">
    <source>
    </source>
</evidence>
<evidence type="ECO:0000269" key="3">
    <source>
    </source>
</evidence>
<evidence type="ECO:0000305" key="4"/>
<accession>Q41760</accession>
<dbReference type="EMBL" id="U43034">
    <property type="protein sequence ID" value="AAB17501.2"/>
    <property type="molecule type" value="mRNA"/>
</dbReference>
<dbReference type="PIR" id="T02719">
    <property type="entry name" value="T02719"/>
</dbReference>
<dbReference type="RefSeq" id="NP_001105384.1">
    <property type="nucleotide sequence ID" value="NM_001111914.1"/>
</dbReference>
<dbReference type="SMR" id="Q41760"/>
<dbReference type="FunCoup" id="Q41760">
    <property type="interactions" value="429"/>
</dbReference>
<dbReference type="STRING" id="4577.Q41760"/>
<dbReference type="TCDB" id="2.A.40.6.3">
    <property type="family name" value="the nucleobase/ascorbate transporter (nat) or nucleobase:cation symporter-2 (ncs2) family"/>
</dbReference>
<dbReference type="PaxDb" id="4577-GRMZM5G858417_P01"/>
<dbReference type="GeneID" id="542332"/>
<dbReference type="KEGG" id="zma:542332"/>
<dbReference type="eggNOG" id="KOG1292">
    <property type="taxonomic scope" value="Eukaryota"/>
</dbReference>
<dbReference type="InParanoid" id="Q41760"/>
<dbReference type="OrthoDB" id="1641903at2759"/>
<dbReference type="BioCyc" id="MetaCyc:MONOMER-14782"/>
<dbReference type="Proteomes" id="UP000007305">
    <property type="component" value="Unplaced"/>
</dbReference>
<dbReference type="ExpressionAtlas" id="Q41760">
    <property type="expression patterns" value="baseline and differential"/>
</dbReference>
<dbReference type="GO" id="GO:0016020">
    <property type="term" value="C:membrane"/>
    <property type="evidence" value="ECO:0007669"/>
    <property type="project" value="UniProtKB-SubCell"/>
</dbReference>
<dbReference type="GO" id="GO:0022857">
    <property type="term" value="F:transmembrane transporter activity"/>
    <property type="evidence" value="ECO:0007669"/>
    <property type="project" value="InterPro"/>
</dbReference>
<dbReference type="InterPro" id="IPR006043">
    <property type="entry name" value="NCS2"/>
</dbReference>
<dbReference type="PANTHER" id="PTHR11119">
    <property type="entry name" value="XANTHINE-URACIL / VITAMIN C PERMEASE FAMILY MEMBER"/>
    <property type="match status" value="1"/>
</dbReference>
<dbReference type="Pfam" id="PF00860">
    <property type="entry name" value="Xan_ur_permease"/>
    <property type="match status" value="1"/>
</dbReference>
<organism>
    <name type="scientific">Zea mays</name>
    <name type="common">Maize</name>
    <dbReference type="NCBI Taxonomy" id="4577"/>
    <lineage>
        <taxon>Eukaryota</taxon>
        <taxon>Viridiplantae</taxon>
        <taxon>Streptophyta</taxon>
        <taxon>Embryophyta</taxon>
        <taxon>Tracheophyta</taxon>
        <taxon>Spermatophyta</taxon>
        <taxon>Magnoliopsida</taxon>
        <taxon>Liliopsida</taxon>
        <taxon>Poales</taxon>
        <taxon>Poaceae</taxon>
        <taxon>PACMAD clade</taxon>
        <taxon>Panicoideae</taxon>
        <taxon>Andropogonodae</taxon>
        <taxon>Andropogoneae</taxon>
        <taxon>Tripsacinae</taxon>
        <taxon>Zea</taxon>
    </lineage>
</organism>